<gene>
    <name evidence="3" type="ordered locus">Os02g0798400</name>
    <name evidence="2" type="ordered locus">LOC_Os02g55500</name>
    <name type="ORF">OJ1695_D07.7</name>
</gene>
<keyword id="KW-1185">Reference proteome</keyword>
<keyword id="KW-0732">Signal</keyword>
<dbReference type="EMBL" id="AP005295">
    <property type="protein sequence ID" value="BAD36055.1"/>
    <property type="molecule type" value="Genomic_DNA"/>
</dbReference>
<dbReference type="EMBL" id="AP008208">
    <property type="protein sequence ID" value="BAF10316.1"/>
    <property type="molecule type" value="Genomic_DNA"/>
</dbReference>
<dbReference type="EMBL" id="AP014958">
    <property type="protein sequence ID" value="BAS81384.1"/>
    <property type="molecule type" value="Genomic_DNA"/>
</dbReference>
<dbReference type="EMBL" id="AK120999">
    <property type="protein sequence ID" value="BAH00266.1"/>
    <property type="molecule type" value="mRNA"/>
</dbReference>
<dbReference type="RefSeq" id="XP_015625704.1">
    <property type="nucleotide sequence ID" value="XM_015770218.1"/>
</dbReference>
<dbReference type="RefSeq" id="XP_015625705.1">
    <property type="nucleotide sequence ID" value="XM_015770219.1"/>
</dbReference>
<dbReference type="SMR" id="P0CE66"/>
<dbReference type="PaxDb" id="39947-P0CE66"/>
<dbReference type="EnsemblPlants" id="Os02t0798400-01">
    <property type="protein sequence ID" value="Os02t0798400-01"/>
    <property type="gene ID" value="Os02g0798400"/>
</dbReference>
<dbReference type="EnsemblPlants" id="Os02t0798501-00">
    <property type="protein sequence ID" value="Os02t0798501-00"/>
    <property type="gene ID" value="Os02g0798501"/>
</dbReference>
<dbReference type="Gramene" id="Os02t0798400-01">
    <property type="protein sequence ID" value="Os02t0798400-01"/>
    <property type="gene ID" value="Os02g0798400"/>
</dbReference>
<dbReference type="Gramene" id="Os02t0798501-00">
    <property type="protein sequence ID" value="Os02t0798501-00"/>
    <property type="gene ID" value="Os02g0798501"/>
</dbReference>
<dbReference type="KEGG" id="dosa:Os02g0798300"/>
<dbReference type="eggNOG" id="ENOG502SNTN">
    <property type="taxonomic scope" value="Eukaryota"/>
</dbReference>
<dbReference type="HOGENOM" id="CLU_160271_0_0_1"/>
<dbReference type="InParanoid" id="P0CE66"/>
<dbReference type="OMA" id="KCAESCE"/>
<dbReference type="OrthoDB" id="699334at2759"/>
<dbReference type="Proteomes" id="UP000000763">
    <property type="component" value="Chromosome 2"/>
</dbReference>
<dbReference type="Proteomes" id="UP000059680">
    <property type="component" value="Chromosome 2"/>
</dbReference>
<dbReference type="ExpressionAtlas" id="P0CE66">
    <property type="expression patterns" value="baseline and differential"/>
</dbReference>
<organism>
    <name type="scientific">Oryza sativa subsp. japonica</name>
    <name type="common">Rice</name>
    <dbReference type="NCBI Taxonomy" id="39947"/>
    <lineage>
        <taxon>Eukaryota</taxon>
        <taxon>Viridiplantae</taxon>
        <taxon>Streptophyta</taxon>
        <taxon>Embryophyta</taxon>
        <taxon>Tracheophyta</taxon>
        <taxon>Spermatophyta</taxon>
        <taxon>Magnoliopsida</taxon>
        <taxon>Liliopsida</taxon>
        <taxon>Poales</taxon>
        <taxon>Poaceae</taxon>
        <taxon>BOP clade</taxon>
        <taxon>Oryzoideae</taxon>
        <taxon>Oryzeae</taxon>
        <taxon>Oryzinae</taxon>
        <taxon>Oryza</taxon>
        <taxon>Oryza sativa</taxon>
    </lineage>
</organism>
<proteinExistence type="evidence at transcript level"/>
<reference key="1">
    <citation type="journal article" date="2005" name="Nature">
        <title>The map-based sequence of the rice genome.</title>
        <authorList>
            <consortium name="International rice genome sequencing project (IRGSP)"/>
        </authorList>
    </citation>
    <scope>NUCLEOTIDE SEQUENCE [LARGE SCALE GENOMIC DNA]</scope>
    <source>
        <strain>cv. Nipponbare</strain>
    </source>
</reference>
<reference key="2">
    <citation type="journal article" date="2008" name="Nucleic Acids Res.">
        <title>The rice annotation project database (RAP-DB): 2008 update.</title>
        <authorList>
            <consortium name="The rice annotation project (RAP)"/>
        </authorList>
    </citation>
    <scope>GENOME REANNOTATION</scope>
    <source>
        <strain>cv. Nipponbare</strain>
    </source>
</reference>
<reference key="3">
    <citation type="journal article" date="2013" name="Rice">
        <title>Improvement of the Oryza sativa Nipponbare reference genome using next generation sequence and optical map data.</title>
        <authorList>
            <person name="Kawahara Y."/>
            <person name="de la Bastide M."/>
            <person name="Hamilton J.P."/>
            <person name="Kanamori H."/>
            <person name="McCombie W.R."/>
            <person name="Ouyang S."/>
            <person name="Schwartz D.C."/>
            <person name="Tanaka T."/>
            <person name="Wu J."/>
            <person name="Zhou S."/>
            <person name="Childs K.L."/>
            <person name="Davidson R.M."/>
            <person name="Lin H."/>
            <person name="Quesada-Ocampo L."/>
            <person name="Vaillancourt B."/>
            <person name="Sakai H."/>
            <person name="Lee S.S."/>
            <person name="Kim J."/>
            <person name="Numa H."/>
            <person name="Itoh T."/>
            <person name="Buell C.R."/>
            <person name="Matsumoto T."/>
        </authorList>
    </citation>
    <scope>GENOME REANNOTATION</scope>
    <source>
        <strain>cv. Nipponbare</strain>
    </source>
</reference>
<reference key="4">
    <citation type="journal article" date="2003" name="Science">
        <title>Collection, mapping, and annotation of over 28,000 cDNA clones from japonica rice.</title>
        <authorList>
            <consortium name="The rice full-length cDNA consortium"/>
        </authorList>
    </citation>
    <scope>NUCLEOTIDE SEQUENCE [LARGE SCALE MRNA]</scope>
    <source>
        <strain>cv. Nipponbare</strain>
    </source>
</reference>
<feature type="signal peptide" evidence="1">
    <location>
        <begin position="1"/>
        <end position="21"/>
    </location>
</feature>
<feature type="chain" id="PRO_0000332747" description="Uncharacterized protein Os02g0798400">
    <location>
        <begin position="22"/>
        <end position="129"/>
    </location>
</feature>
<accession>P0CE66</accession>
<accession>A0A0N7KG94</accession>
<accession>Q69QZ5</accession>
<protein>
    <recommendedName>
        <fullName>Uncharacterized protein Os02g0798400</fullName>
    </recommendedName>
    <alternativeName>
        <fullName>Unknown protein AN04</fullName>
    </alternativeName>
</protein>
<sequence>MAQNKTIAVALLLATLVAVMGKEPETLEEAVRAGCKEECSEQKKKAPIDEKQCEDFCFIKTKSIFEAHKGVKDLKADRFIDFCNNECNAVYKEDPATSKKCAESCEADAKEAEVFLDKVVAYIQTTKQA</sequence>
<evidence type="ECO:0000255" key="1"/>
<evidence type="ECO:0000305" key="2"/>
<evidence type="ECO:0000312" key="3">
    <source>
        <dbReference type="EMBL" id="BAS81384.1"/>
    </source>
</evidence>
<name>Y2984_ORYSJ</name>